<keyword id="KW-0472">Membrane</keyword>
<keyword id="KW-0653">Protein transport</keyword>
<keyword id="KW-1267">Proteomics identification</keyword>
<keyword id="KW-1185">Reference proteome</keyword>
<keyword id="KW-0812">Transmembrane</keyword>
<keyword id="KW-1133">Transmembrane helix</keyword>
<keyword id="KW-0813">Transport</keyword>
<evidence type="ECO:0000250" key="1">
    <source>
        <dbReference type="UniProtKB" id="P38166"/>
    </source>
</evidence>
<evidence type="ECO:0000255" key="2"/>
<evidence type="ECO:0000312" key="3">
    <source>
        <dbReference type="EMBL" id="AAX82032.1"/>
    </source>
</evidence>
<evidence type="ECO:0000312" key="4">
    <source>
        <dbReference type="EMBL" id="BAC11053.1"/>
    </source>
</evidence>
<evidence type="ECO:0000312" key="5">
    <source>
        <dbReference type="HGNC" id="HGNC:28767"/>
    </source>
</evidence>
<gene>
    <name evidence="5" type="primary">SFT2D3</name>
</gene>
<comment type="function">
    <text evidence="1">May be involved in fusion of retrograde transport vesicles derived from an endocytic compartment with the Golgi complex.</text>
</comment>
<comment type="subcellular location">
    <subcellularLocation>
        <location evidence="2">Membrane</location>
        <topology evidence="2">Multi-pass membrane protein</topology>
    </subcellularLocation>
</comment>
<comment type="similarity">
    <text evidence="2">Belongs to the SFT2 family.</text>
</comment>
<feature type="chain" id="PRO_0000238613" description="Vesicle transport protein SFT2C">
    <location>
        <begin position="1"/>
        <end position="215"/>
    </location>
</feature>
<feature type="topological domain" description="Cytoplasmic" evidence="2">
    <location>
        <begin position="1"/>
        <end position="82"/>
    </location>
</feature>
<feature type="transmembrane region" description="Helical; Name=1" evidence="2">
    <location>
        <begin position="83"/>
        <end position="103"/>
    </location>
</feature>
<feature type="topological domain" description="Lumenal" evidence="2">
    <location>
        <begin position="104"/>
        <end position="107"/>
    </location>
</feature>
<feature type="transmembrane region" description="Helical; Name=2" evidence="2">
    <location>
        <begin position="108"/>
        <end position="128"/>
    </location>
</feature>
<feature type="topological domain" description="Cytoplasmic" evidence="2">
    <location>
        <begin position="129"/>
        <end position="142"/>
    </location>
</feature>
<feature type="transmembrane region" description="Helical; Name=3" evidence="2">
    <location>
        <begin position="143"/>
        <end position="163"/>
    </location>
</feature>
<feature type="topological domain" description="Lumenal" evidence="2">
    <location>
        <begin position="164"/>
        <end position="166"/>
    </location>
</feature>
<feature type="transmembrane region" description="Helical; Name=4" evidence="2">
    <location>
        <begin position="167"/>
        <end position="187"/>
    </location>
</feature>
<feature type="topological domain" description="Cytoplasmic" evidence="2">
    <location>
        <begin position="188"/>
        <end position="215"/>
    </location>
</feature>
<feature type="sequence variant" id="VAR_026558" description="In dbSNP:rs10206957.">
    <original>R</original>
    <variation>G</variation>
    <location>
        <position position="38"/>
    </location>
</feature>
<dbReference type="EMBL" id="AK074549">
    <property type="protein sequence ID" value="BAC11053.1"/>
    <property type="molecule type" value="mRNA"/>
</dbReference>
<dbReference type="EMBL" id="AC006011">
    <property type="protein sequence ID" value="AAX82032.1"/>
    <property type="molecule type" value="Genomic_DNA"/>
</dbReference>
<dbReference type="CCDS" id="CCDS2149.1"/>
<dbReference type="RefSeq" id="NP_116129.3">
    <property type="nucleotide sequence ID" value="NM_032740.3"/>
</dbReference>
<dbReference type="BioGRID" id="124284">
    <property type="interactions" value="28"/>
</dbReference>
<dbReference type="FunCoup" id="Q587I9">
    <property type="interactions" value="1197"/>
</dbReference>
<dbReference type="IntAct" id="Q587I9">
    <property type="interactions" value="11"/>
</dbReference>
<dbReference type="STRING" id="9606.ENSP00000310803"/>
<dbReference type="iPTMnet" id="Q587I9"/>
<dbReference type="PhosphoSitePlus" id="Q587I9"/>
<dbReference type="SwissPalm" id="Q587I9"/>
<dbReference type="BioMuta" id="SFT2D3"/>
<dbReference type="DMDM" id="74721667"/>
<dbReference type="jPOST" id="Q587I9"/>
<dbReference type="MassIVE" id="Q587I9"/>
<dbReference type="PaxDb" id="9606-ENSP00000310803"/>
<dbReference type="PeptideAtlas" id="Q587I9"/>
<dbReference type="ProteomicsDB" id="62599"/>
<dbReference type="Pumba" id="Q587I9"/>
<dbReference type="Antibodypedia" id="47566">
    <property type="antibodies" value="106 antibodies from 21 providers"/>
</dbReference>
<dbReference type="DNASU" id="84826"/>
<dbReference type="Ensembl" id="ENST00000310981.6">
    <property type="protein sequence ID" value="ENSP00000310803.3"/>
    <property type="gene ID" value="ENSG00000173349.6"/>
</dbReference>
<dbReference type="GeneID" id="84826"/>
<dbReference type="KEGG" id="hsa:84826"/>
<dbReference type="MANE-Select" id="ENST00000310981.6">
    <property type="protein sequence ID" value="ENSP00000310803.3"/>
    <property type="RefSeq nucleotide sequence ID" value="NM_032740.4"/>
    <property type="RefSeq protein sequence ID" value="NP_116129.3"/>
</dbReference>
<dbReference type="UCSC" id="uc002tpf.4">
    <property type="organism name" value="human"/>
</dbReference>
<dbReference type="AGR" id="HGNC:28767"/>
<dbReference type="CTD" id="84826"/>
<dbReference type="GeneCards" id="SFT2D3"/>
<dbReference type="HGNC" id="HGNC:28767">
    <property type="gene designation" value="SFT2D3"/>
</dbReference>
<dbReference type="HPA" id="ENSG00000173349">
    <property type="expression patterns" value="Low tissue specificity"/>
</dbReference>
<dbReference type="neXtProt" id="NX_Q587I9"/>
<dbReference type="OpenTargets" id="ENSG00000173349"/>
<dbReference type="PharmGKB" id="PA142670929"/>
<dbReference type="VEuPathDB" id="HostDB:ENSG00000173349"/>
<dbReference type="eggNOG" id="ENOG502QV5D">
    <property type="taxonomic scope" value="Eukaryota"/>
</dbReference>
<dbReference type="GeneTree" id="ENSGT00390000018525"/>
<dbReference type="HOGENOM" id="CLU_099529_3_1_1"/>
<dbReference type="InParanoid" id="Q587I9"/>
<dbReference type="OMA" id="GLMFFTR"/>
<dbReference type="OrthoDB" id="660759at2759"/>
<dbReference type="PAN-GO" id="Q587I9">
    <property type="GO annotations" value="0 GO annotations based on evolutionary models"/>
</dbReference>
<dbReference type="PhylomeDB" id="Q587I9"/>
<dbReference type="TreeFam" id="TF313609"/>
<dbReference type="PathwayCommons" id="Q587I9"/>
<dbReference type="SignaLink" id="Q587I9"/>
<dbReference type="BioGRID-ORCS" id="84826">
    <property type="hits" value="17 hits in 1084 CRISPR screens"/>
</dbReference>
<dbReference type="ChiTaRS" id="SFT2D3">
    <property type="organism name" value="human"/>
</dbReference>
<dbReference type="GenomeRNAi" id="84826"/>
<dbReference type="Pharos" id="Q587I9">
    <property type="development level" value="Tdark"/>
</dbReference>
<dbReference type="PRO" id="PR:Q587I9"/>
<dbReference type="Proteomes" id="UP000005640">
    <property type="component" value="Chromosome 2"/>
</dbReference>
<dbReference type="RNAct" id="Q587I9">
    <property type="molecule type" value="protein"/>
</dbReference>
<dbReference type="Bgee" id="ENSG00000173349">
    <property type="expression patterns" value="Expressed in ileal mucosa and 114 other cell types or tissues"/>
</dbReference>
<dbReference type="GO" id="GO:0005737">
    <property type="term" value="C:cytoplasm"/>
    <property type="evidence" value="ECO:0007669"/>
    <property type="project" value="UniProtKB-ARBA"/>
</dbReference>
<dbReference type="GO" id="GO:0012505">
    <property type="term" value="C:endomembrane system"/>
    <property type="evidence" value="ECO:0007669"/>
    <property type="project" value="UniProtKB-ARBA"/>
</dbReference>
<dbReference type="GO" id="GO:0043231">
    <property type="term" value="C:intracellular membrane-bounded organelle"/>
    <property type="evidence" value="ECO:0007669"/>
    <property type="project" value="UniProtKB-ARBA"/>
</dbReference>
<dbReference type="GO" id="GO:0016020">
    <property type="term" value="C:membrane"/>
    <property type="evidence" value="ECO:0007669"/>
    <property type="project" value="UniProtKB-SubCell"/>
</dbReference>
<dbReference type="GO" id="GO:0015031">
    <property type="term" value="P:protein transport"/>
    <property type="evidence" value="ECO:0007669"/>
    <property type="project" value="UniProtKB-KW"/>
</dbReference>
<dbReference type="GO" id="GO:0016192">
    <property type="term" value="P:vesicle-mediated transport"/>
    <property type="evidence" value="ECO:0007669"/>
    <property type="project" value="InterPro"/>
</dbReference>
<dbReference type="InterPro" id="IPR007305">
    <property type="entry name" value="Vesicle_transpt_Got1/SFT2"/>
</dbReference>
<dbReference type="InterPro" id="IPR011691">
    <property type="entry name" value="Vesicle_transpt_SFT2"/>
</dbReference>
<dbReference type="PANTHER" id="PTHR23137:SF36">
    <property type="entry name" value="VESICLE TRANSPORT PROTEIN SFT2C"/>
    <property type="match status" value="1"/>
</dbReference>
<dbReference type="PANTHER" id="PTHR23137">
    <property type="entry name" value="VESICLE TRANSPORT PROTEIN-RELATED"/>
    <property type="match status" value="1"/>
</dbReference>
<dbReference type="Pfam" id="PF04178">
    <property type="entry name" value="Got1"/>
    <property type="match status" value="1"/>
</dbReference>
<accession>Q587I9</accession>
<accession>Q8N2P9</accession>
<protein>
    <recommendedName>
        <fullName>Vesicle transport protein SFT2C</fullName>
    </recommendedName>
    <alternativeName>
        <fullName>SFT2 domain-containing protein 3</fullName>
    </alternativeName>
</protein>
<name>SFT2C_HUMAN</name>
<organism>
    <name type="scientific">Homo sapiens</name>
    <name type="common">Human</name>
    <dbReference type="NCBI Taxonomy" id="9606"/>
    <lineage>
        <taxon>Eukaryota</taxon>
        <taxon>Metazoa</taxon>
        <taxon>Chordata</taxon>
        <taxon>Craniata</taxon>
        <taxon>Vertebrata</taxon>
        <taxon>Euteleostomi</taxon>
        <taxon>Mammalia</taxon>
        <taxon>Eutheria</taxon>
        <taxon>Euarchontoglires</taxon>
        <taxon>Primates</taxon>
        <taxon>Haplorrhini</taxon>
        <taxon>Catarrhini</taxon>
        <taxon>Hominidae</taxon>
        <taxon>Homo</taxon>
    </lineage>
</organism>
<proteinExistence type="evidence at protein level"/>
<reference evidence="4" key="1">
    <citation type="journal article" date="2005" name="DNA Res.">
        <title>Signal sequence and keyword trap in silico for selection of full-length human cDNAs encoding secretion or membrane proteins from oligo-capped cDNA libraries.</title>
        <authorList>
            <person name="Otsuki T."/>
            <person name="Ota T."/>
            <person name="Nishikawa T."/>
            <person name="Hayashi K."/>
            <person name="Suzuki Y."/>
            <person name="Yamamoto J."/>
            <person name="Wakamatsu A."/>
            <person name="Kimura K."/>
            <person name="Sakamoto K."/>
            <person name="Hatano N."/>
            <person name="Kawai Y."/>
            <person name="Ishii S."/>
            <person name="Saito K."/>
            <person name="Kojima S."/>
            <person name="Sugiyama T."/>
            <person name="Ono T."/>
            <person name="Okano K."/>
            <person name="Yoshikawa Y."/>
            <person name="Aotsuka S."/>
            <person name="Sasaki N."/>
            <person name="Hattori A."/>
            <person name="Okumura K."/>
            <person name="Nagai K."/>
            <person name="Sugano S."/>
            <person name="Isogai T."/>
        </authorList>
    </citation>
    <scope>NUCLEOTIDE SEQUENCE [LARGE SCALE MRNA]</scope>
    <source>
        <tissue evidence="4">Embryo</tissue>
    </source>
</reference>
<reference evidence="3" key="2">
    <citation type="journal article" date="2005" name="Nature">
        <title>Generation and annotation of the DNA sequences of human chromosomes 2 and 4.</title>
        <authorList>
            <person name="Hillier L.W."/>
            <person name="Graves T.A."/>
            <person name="Fulton R.S."/>
            <person name="Fulton L.A."/>
            <person name="Pepin K.H."/>
            <person name="Minx P."/>
            <person name="Wagner-McPherson C."/>
            <person name="Layman D."/>
            <person name="Wylie K."/>
            <person name="Sekhon M."/>
            <person name="Becker M.C."/>
            <person name="Fewell G.A."/>
            <person name="Delehaunty K.D."/>
            <person name="Miner T.L."/>
            <person name="Nash W.E."/>
            <person name="Kremitzki C."/>
            <person name="Oddy L."/>
            <person name="Du H."/>
            <person name="Sun H."/>
            <person name="Bradshaw-Cordum H."/>
            <person name="Ali J."/>
            <person name="Carter J."/>
            <person name="Cordes M."/>
            <person name="Harris A."/>
            <person name="Isak A."/>
            <person name="van Brunt A."/>
            <person name="Nguyen C."/>
            <person name="Du F."/>
            <person name="Courtney L."/>
            <person name="Kalicki J."/>
            <person name="Ozersky P."/>
            <person name="Abbott S."/>
            <person name="Armstrong J."/>
            <person name="Belter E.A."/>
            <person name="Caruso L."/>
            <person name="Cedroni M."/>
            <person name="Cotton M."/>
            <person name="Davidson T."/>
            <person name="Desai A."/>
            <person name="Elliott G."/>
            <person name="Erb T."/>
            <person name="Fronick C."/>
            <person name="Gaige T."/>
            <person name="Haakenson W."/>
            <person name="Haglund K."/>
            <person name="Holmes A."/>
            <person name="Harkins R."/>
            <person name="Kim K."/>
            <person name="Kruchowski S.S."/>
            <person name="Strong C.M."/>
            <person name="Grewal N."/>
            <person name="Goyea E."/>
            <person name="Hou S."/>
            <person name="Levy A."/>
            <person name="Martinka S."/>
            <person name="Mead K."/>
            <person name="McLellan M.D."/>
            <person name="Meyer R."/>
            <person name="Randall-Maher J."/>
            <person name="Tomlinson C."/>
            <person name="Dauphin-Kohlberg S."/>
            <person name="Kozlowicz-Reilly A."/>
            <person name="Shah N."/>
            <person name="Swearengen-Shahid S."/>
            <person name="Snider J."/>
            <person name="Strong J.T."/>
            <person name="Thompson J."/>
            <person name="Yoakum M."/>
            <person name="Leonard S."/>
            <person name="Pearman C."/>
            <person name="Trani L."/>
            <person name="Radionenko M."/>
            <person name="Waligorski J.E."/>
            <person name="Wang C."/>
            <person name="Rock S.M."/>
            <person name="Tin-Wollam A.-M."/>
            <person name="Maupin R."/>
            <person name="Latreille P."/>
            <person name="Wendl M.C."/>
            <person name="Yang S.-P."/>
            <person name="Pohl C."/>
            <person name="Wallis J.W."/>
            <person name="Spieth J."/>
            <person name="Bieri T.A."/>
            <person name="Berkowicz N."/>
            <person name="Nelson J.O."/>
            <person name="Osborne J."/>
            <person name="Ding L."/>
            <person name="Meyer R."/>
            <person name="Sabo A."/>
            <person name="Shotland Y."/>
            <person name="Sinha P."/>
            <person name="Wohldmann P.E."/>
            <person name="Cook L.L."/>
            <person name="Hickenbotham M.T."/>
            <person name="Eldred J."/>
            <person name="Williams D."/>
            <person name="Jones T.A."/>
            <person name="She X."/>
            <person name="Ciccarelli F.D."/>
            <person name="Izaurralde E."/>
            <person name="Taylor J."/>
            <person name="Schmutz J."/>
            <person name="Myers R.M."/>
            <person name="Cox D.R."/>
            <person name="Huang X."/>
            <person name="McPherson J.D."/>
            <person name="Mardis E.R."/>
            <person name="Clifton S.W."/>
            <person name="Warren W.C."/>
            <person name="Chinwalla A.T."/>
            <person name="Eddy S.R."/>
            <person name="Marra M.A."/>
            <person name="Ovcharenko I."/>
            <person name="Furey T.S."/>
            <person name="Miller W."/>
            <person name="Eichler E.E."/>
            <person name="Bork P."/>
            <person name="Suyama M."/>
            <person name="Torrents D."/>
            <person name="Waterston R.H."/>
            <person name="Wilson R.K."/>
        </authorList>
    </citation>
    <scope>NUCLEOTIDE SEQUENCE [LARGE SCALE GENOMIC DNA]</scope>
</reference>
<sequence>MADLHRQLQEYLAQGKAGGPAAAEPLLAAEKAEEPGDRPAEEWLGRAGLRWTWARSPAESAAAGLTCLPSVTRGQRLAAGGGCLLLAALCFGLAALYAPVLLLRARKFALLWSLGSALALAGSALLRGGAACGRLLRCEEAPSRPALLYMAALGATLFAALGLRSTLLTVLGAGAQVAALLAALVGLLPWGGGTALRLALGRLGRGAGLAKVLPV</sequence>